<proteinExistence type="inferred from homology"/>
<protein>
    <recommendedName>
        <fullName evidence="1">Methionyl-tRNA formyltransferase</fullName>
        <ecNumber evidence="1">2.1.2.9</ecNumber>
    </recommendedName>
</protein>
<name>FMT_STRMU</name>
<organism>
    <name type="scientific">Streptococcus mutans serotype c (strain ATCC 700610 / UA159)</name>
    <dbReference type="NCBI Taxonomy" id="210007"/>
    <lineage>
        <taxon>Bacteria</taxon>
        <taxon>Bacillati</taxon>
        <taxon>Bacillota</taxon>
        <taxon>Bacilli</taxon>
        <taxon>Lactobacillales</taxon>
        <taxon>Streptococcaceae</taxon>
        <taxon>Streptococcus</taxon>
    </lineage>
</organism>
<comment type="function">
    <text evidence="1">Attaches a formyl group to the free amino group of methionyl-tRNA(fMet). The formyl group appears to play a dual role in the initiator identity of N-formylmethionyl-tRNA by promoting its recognition by IF2 and preventing the misappropriation of this tRNA by the elongation apparatus.</text>
</comment>
<comment type="catalytic activity">
    <reaction evidence="1">
        <text>L-methionyl-tRNA(fMet) + (6R)-10-formyltetrahydrofolate = N-formyl-L-methionyl-tRNA(fMet) + (6S)-5,6,7,8-tetrahydrofolate + H(+)</text>
        <dbReference type="Rhea" id="RHEA:24380"/>
        <dbReference type="Rhea" id="RHEA-COMP:9952"/>
        <dbReference type="Rhea" id="RHEA-COMP:9953"/>
        <dbReference type="ChEBI" id="CHEBI:15378"/>
        <dbReference type="ChEBI" id="CHEBI:57453"/>
        <dbReference type="ChEBI" id="CHEBI:78530"/>
        <dbReference type="ChEBI" id="CHEBI:78844"/>
        <dbReference type="ChEBI" id="CHEBI:195366"/>
        <dbReference type="EC" id="2.1.2.9"/>
    </reaction>
</comment>
<comment type="similarity">
    <text evidence="1">Belongs to the Fmt family.</text>
</comment>
<comment type="sequence caution" evidence="2">
    <conflict type="erroneous initiation">
        <sequence resource="EMBL-CDS" id="AAN58227"/>
    </conflict>
</comment>
<keyword id="KW-0648">Protein biosynthesis</keyword>
<keyword id="KW-1185">Reference proteome</keyword>
<keyword id="KW-0808">Transferase</keyword>
<dbReference type="EC" id="2.1.2.9" evidence="1"/>
<dbReference type="EMBL" id="AE014133">
    <property type="protein sequence ID" value="AAN58227.1"/>
    <property type="status" value="ALT_INIT"/>
    <property type="molecule type" value="Genomic_DNA"/>
</dbReference>
<dbReference type="RefSeq" id="NP_720921.1">
    <property type="nucleotide sequence ID" value="NC_004350.2"/>
</dbReference>
<dbReference type="RefSeq" id="WP_002263042.1">
    <property type="nucleotide sequence ID" value="NC_004350.2"/>
</dbReference>
<dbReference type="SMR" id="Q8DVK4"/>
<dbReference type="STRING" id="210007.SMU_481"/>
<dbReference type="GeneID" id="93859951"/>
<dbReference type="KEGG" id="smu:SMU_481"/>
<dbReference type="PATRIC" id="fig|210007.7.peg.421"/>
<dbReference type="eggNOG" id="COG0223">
    <property type="taxonomic scope" value="Bacteria"/>
</dbReference>
<dbReference type="HOGENOM" id="CLU_033347_1_1_9"/>
<dbReference type="OrthoDB" id="9802815at2"/>
<dbReference type="Proteomes" id="UP000002512">
    <property type="component" value="Chromosome"/>
</dbReference>
<dbReference type="GO" id="GO:0005829">
    <property type="term" value="C:cytosol"/>
    <property type="evidence" value="ECO:0007669"/>
    <property type="project" value="TreeGrafter"/>
</dbReference>
<dbReference type="GO" id="GO:0004479">
    <property type="term" value="F:methionyl-tRNA formyltransferase activity"/>
    <property type="evidence" value="ECO:0007669"/>
    <property type="project" value="UniProtKB-UniRule"/>
</dbReference>
<dbReference type="CDD" id="cd08646">
    <property type="entry name" value="FMT_core_Met-tRNA-FMT_N"/>
    <property type="match status" value="1"/>
</dbReference>
<dbReference type="CDD" id="cd08704">
    <property type="entry name" value="Met_tRNA_FMT_C"/>
    <property type="match status" value="1"/>
</dbReference>
<dbReference type="FunFam" id="3.40.50.170:FF:000004">
    <property type="entry name" value="Methionyl-tRNA formyltransferase"/>
    <property type="match status" value="1"/>
</dbReference>
<dbReference type="Gene3D" id="3.10.25.10">
    <property type="entry name" value="Formyl transferase, C-terminal domain"/>
    <property type="match status" value="1"/>
</dbReference>
<dbReference type="Gene3D" id="3.40.50.170">
    <property type="entry name" value="Formyl transferase, N-terminal domain"/>
    <property type="match status" value="1"/>
</dbReference>
<dbReference type="HAMAP" id="MF_00182">
    <property type="entry name" value="Formyl_trans"/>
    <property type="match status" value="1"/>
</dbReference>
<dbReference type="InterPro" id="IPR005794">
    <property type="entry name" value="Fmt"/>
</dbReference>
<dbReference type="InterPro" id="IPR005793">
    <property type="entry name" value="Formyl_trans_C"/>
</dbReference>
<dbReference type="InterPro" id="IPR037022">
    <property type="entry name" value="Formyl_trans_C_sf"/>
</dbReference>
<dbReference type="InterPro" id="IPR002376">
    <property type="entry name" value="Formyl_transf_N"/>
</dbReference>
<dbReference type="InterPro" id="IPR036477">
    <property type="entry name" value="Formyl_transf_N_sf"/>
</dbReference>
<dbReference type="InterPro" id="IPR011034">
    <property type="entry name" value="Formyl_transferase-like_C_sf"/>
</dbReference>
<dbReference type="InterPro" id="IPR001555">
    <property type="entry name" value="GART_AS"/>
</dbReference>
<dbReference type="InterPro" id="IPR044135">
    <property type="entry name" value="Met-tRNA-FMT_C"/>
</dbReference>
<dbReference type="InterPro" id="IPR041711">
    <property type="entry name" value="Met-tRNA-FMT_N"/>
</dbReference>
<dbReference type="NCBIfam" id="TIGR00460">
    <property type="entry name" value="fmt"/>
    <property type="match status" value="1"/>
</dbReference>
<dbReference type="PANTHER" id="PTHR11138">
    <property type="entry name" value="METHIONYL-TRNA FORMYLTRANSFERASE"/>
    <property type="match status" value="1"/>
</dbReference>
<dbReference type="PANTHER" id="PTHR11138:SF5">
    <property type="entry name" value="METHIONYL-TRNA FORMYLTRANSFERASE, MITOCHONDRIAL"/>
    <property type="match status" value="1"/>
</dbReference>
<dbReference type="Pfam" id="PF02911">
    <property type="entry name" value="Formyl_trans_C"/>
    <property type="match status" value="1"/>
</dbReference>
<dbReference type="Pfam" id="PF00551">
    <property type="entry name" value="Formyl_trans_N"/>
    <property type="match status" value="1"/>
</dbReference>
<dbReference type="SUPFAM" id="SSF50486">
    <property type="entry name" value="FMT C-terminal domain-like"/>
    <property type="match status" value="1"/>
</dbReference>
<dbReference type="SUPFAM" id="SSF53328">
    <property type="entry name" value="Formyltransferase"/>
    <property type="match status" value="1"/>
</dbReference>
<dbReference type="PROSITE" id="PS00373">
    <property type="entry name" value="GART"/>
    <property type="match status" value="1"/>
</dbReference>
<reference key="1">
    <citation type="journal article" date="2002" name="Proc. Natl. Acad. Sci. U.S.A.">
        <title>Genome sequence of Streptococcus mutans UA159, a cariogenic dental pathogen.</title>
        <authorList>
            <person name="Ajdic D.J."/>
            <person name="McShan W.M."/>
            <person name="McLaughlin R.E."/>
            <person name="Savic G."/>
            <person name="Chang J."/>
            <person name="Carson M.B."/>
            <person name="Primeaux C."/>
            <person name="Tian R."/>
            <person name="Kenton S."/>
            <person name="Jia H.G."/>
            <person name="Lin S.P."/>
            <person name="Qian Y."/>
            <person name="Li S."/>
            <person name="Zhu H."/>
            <person name="Najar F.Z."/>
            <person name="Lai H."/>
            <person name="White J."/>
            <person name="Roe B.A."/>
            <person name="Ferretti J.J."/>
        </authorList>
    </citation>
    <scope>NUCLEOTIDE SEQUENCE [LARGE SCALE GENOMIC DNA]</scope>
    <source>
        <strain>ATCC 700610 / UA159</strain>
    </source>
</reference>
<feature type="chain" id="PRO_0000083057" description="Methionyl-tRNA formyltransferase">
    <location>
        <begin position="1"/>
        <end position="311"/>
    </location>
</feature>
<feature type="binding site" evidence="1">
    <location>
        <begin position="110"/>
        <end position="113"/>
    </location>
    <ligand>
        <name>(6S)-5,6,7,8-tetrahydrofolate</name>
        <dbReference type="ChEBI" id="CHEBI:57453"/>
    </ligand>
</feature>
<evidence type="ECO:0000255" key="1">
    <source>
        <dbReference type="HAMAP-Rule" id="MF_00182"/>
    </source>
</evidence>
<evidence type="ECO:0000305" key="2"/>
<accession>Q8DVK4</accession>
<sequence>MTKLIFMGTPDFSATVLKGLLEDSHYHVLAVVTQPDRAVGRKKEIKMTPVKQLALEHGLKVYQPEKLSGSSEMVELMNLGADGIVTAAFGQFLPMILINSVDFAVNVHASLLPKYRGGAPIHYAIINGDKKAGVTIMEMVKEMDAGDMIAKASTPITDADDVGTMFEKLAIIGRDLLLQTLPGYLSGKIEPQAQDDSQATFSPNISSQEEKIDWSKSARDIFNQVRGMNPWPVAHTLLDGKRFKIYAVEVVNGAGNPGEIIEKTKKALIVAANQDALSLKLVQPAGKPKMSITDFLNGLGQKLKVGDYFGK</sequence>
<gene>
    <name evidence="1" type="primary">fmt</name>
    <name type="ordered locus">SMU_481</name>
</gene>